<accession>A7FYX2</accession>
<reference key="1">
    <citation type="journal article" date="2007" name="PLoS ONE">
        <title>Analysis of the neurotoxin complex genes in Clostridium botulinum A1-A4 and B1 strains: BoNT/A3, /Ba4 and /B1 clusters are located within plasmids.</title>
        <authorList>
            <person name="Smith T.J."/>
            <person name="Hill K.K."/>
            <person name="Foley B.T."/>
            <person name="Detter J.C."/>
            <person name="Munk A.C."/>
            <person name="Bruce D.C."/>
            <person name="Doggett N.A."/>
            <person name="Smith L.A."/>
            <person name="Marks J.D."/>
            <person name="Xie G."/>
            <person name="Brettin T.S."/>
        </authorList>
    </citation>
    <scope>NUCLEOTIDE SEQUENCE [LARGE SCALE GENOMIC DNA]</scope>
    <source>
        <strain>ATCC 19397 / Type A</strain>
    </source>
</reference>
<dbReference type="EC" id="1.3.1.98" evidence="1"/>
<dbReference type="EMBL" id="CP000726">
    <property type="protein sequence ID" value="ABS35506.1"/>
    <property type="molecule type" value="Genomic_DNA"/>
</dbReference>
<dbReference type="RefSeq" id="WP_012048307.1">
    <property type="nucleotide sequence ID" value="NC_009697.1"/>
</dbReference>
<dbReference type="SMR" id="A7FYX2"/>
<dbReference type="GeneID" id="5187158"/>
<dbReference type="KEGG" id="cba:CLB_3434"/>
<dbReference type="HOGENOM" id="CLU_035304_1_1_9"/>
<dbReference type="UniPathway" id="UPA00219"/>
<dbReference type="GO" id="GO:0005829">
    <property type="term" value="C:cytosol"/>
    <property type="evidence" value="ECO:0007669"/>
    <property type="project" value="TreeGrafter"/>
</dbReference>
<dbReference type="GO" id="GO:0071949">
    <property type="term" value="F:FAD binding"/>
    <property type="evidence" value="ECO:0007669"/>
    <property type="project" value="InterPro"/>
</dbReference>
<dbReference type="GO" id="GO:0008762">
    <property type="term" value="F:UDP-N-acetylmuramate dehydrogenase activity"/>
    <property type="evidence" value="ECO:0007669"/>
    <property type="project" value="UniProtKB-UniRule"/>
</dbReference>
<dbReference type="GO" id="GO:0051301">
    <property type="term" value="P:cell division"/>
    <property type="evidence" value="ECO:0007669"/>
    <property type="project" value="UniProtKB-KW"/>
</dbReference>
<dbReference type="GO" id="GO:0071555">
    <property type="term" value="P:cell wall organization"/>
    <property type="evidence" value="ECO:0007669"/>
    <property type="project" value="UniProtKB-KW"/>
</dbReference>
<dbReference type="GO" id="GO:0009252">
    <property type="term" value="P:peptidoglycan biosynthetic process"/>
    <property type="evidence" value="ECO:0007669"/>
    <property type="project" value="UniProtKB-UniRule"/>
</dbReference>
<dbReference type="GO" id="GO:0008360">
    <property type="term" value="P:regulation of cell shape"/>
    <property type="evidence" value="ECO:0007669"/>
    <property type="project" value="UniProtKB-KW"/>
</dbReference>
<dbReference type="Gene3D" id="3.30.465.10">
    <property type="match status" value="1"/>
</dbReference>
<dbReference type="Gene3D" id="3.90.78.10">
    <property type="entry name" value="UDP-N-acetylenolpyruvoylglucosamine reductase, C-terminal domain"/>
    <property type="match status" value="1"/>
</dbReference>
<dbReference type="Gene3D" id="3.30.43.10">
    <property type="entry name" value="Uridine Diphospho-n-acetylenolpyruvylglucosamine Reductase, domain 2"/>
    <property type="match status" value="1"/>
</dbReference>
<dbReference type="HAMAP" id="MF_00037">
    <property type="entry name" value="MurB"/>
    <property type="match status" value="1"/>
</dbReference>
<dbReference type="InterPro" id="IPR016166">
    <property type="entry name" value="FAD-bd_PCMH"/>
</dbReference>
<dbReference type="InterPro" id="IPR036318">
    <property type="entry name" value="FAD-bd_PCMH-like_sf"/>
</dbReference>
<dbReference type="InterPro" id="IPR016167">
    <property type="entry name" value="FAD-bd_PCMH_sub1"/>
</dbReference>
<dbReference type="InterPro" id="IPR016169">
    <property type="entry name" value="FAD-bd_PCMH_sub2"/>
</dbReference>
<dbReference type="InterPro" id="IPR003170">
    <property type="entry name" value="MurB"/>
</dbReference>
<dbReference type="InterPro" id="IPR011601">
    <property type="entry name" value="MurB_C"/>
</dbReference>
<dbReference type="InterPro" id="IPR036635">
    <property type="entry name" value="MurB_C_sf"/>
</dbReference>
<dbReference type="InterPro" id="IPR006094">
    <property type="entry name" value="Oxid_FAD_bind_N"/>
</dbReference>
<dbReference type="NCBIfam" id="TIGR00179">
    <property type="entry name" value="murB"/>
    <property type="match status" value="1"/>
</dbReference>
<dbReference type="NCBIfam" id="NF010480">
    <property type="entry name" value="PRK13905.1"/>
    <property type="match status" value="1"/>
</dbReference>
<dbReference type="PANTHER" id="PTHR21071">
    <property type="entry name" value="UDP-N-ACETYLENOLPYRUVOYLGLUCOSAMINE REDUCTASE"/>
    <property type="match status" value="1"/>
</dbReference>
<dbReference type="PANTHER" id="PTHR21071:SF4">
    <property type="entry name" value="UDP-N-ACETYLENOLPYRUVOYLGLUCOSAMINE REDUCTASE"/>
    <property type="match status" value="1"/>
</dbReference>
<dbReference type="Pfam" id="PF01565">
    <property type="entry name" value="FAD_binding_4"/>
    <property type="match status" value="1"/>
</dbReference>
<dbReference type="Pfam" id="PF02873">
    <property type="entry name" value="MurB_C"/>
    <property type="match status" value="1"/>
</dbReference>
<dbReference type="SUPFAM" id="SSF56176">
    <property type="entry name" value="FAD-binding/transporter-associated domain-like"/>
    <property type="match status" value="1"/>
</dbReference>
<dbReference type="SUPFAM" id="SSF56194">
    <property type="entry name" value="Uridine diphospho-N-Acetylenolpyruvylglucosamine reductase, MurB, C-terminal domain"/>
    <property type="match status" value="1"/>
</dbReference>
<dbReference type="PROSITE" id="PS51387">
    <property type="entry name" value="FAD_PCMH"/>
    <property type="match status" value="1"/>
</dbReference>
<evidence type="ECO:0000255" key="1">
    <source>
        <dbReference type="HAMAP-Rule" id="MF_00037"/>
    </source>
</evidence>
<sequence length="306" mass="33648">MNQYKNFIMQFEDIVGNNNVLIDEPMKKHTSFKVGGPADLLITPTTLEQVKDSIILCRNNSIPYYIIGNGSNLLVRDGGIRGVVIKFLKLGDIKVEGDRVIAQSGAPLTNICNEALKSNLGGLEFACGIPGSVGGAVTMNAGAYNGEISQVIESAKVIDKDGNVFLLNKEQLDLGYRMSAIQKYHYIVLEVTFKLHNSEYDTIKNRIMDLNRRRTEKQPLEYPSAGSTFKRPEGHFAAKLIEDTGLKGESIGGAQVSEKHSGFIINKGGATAGDILNLIEFVQNKVMEKFEVDLHTEVRIIGEENN</sequence>
<gene>
    <name evidence="1" type="primary">murB</name>
    <name type="ordered locus">CLB_3434</name>
</gene>
<feature type="chain" id="PRO_1000002878" description="UDP-N-acetylenolpyruvoylglucosamine reductase">
    <location>
        <begin position="1"/>
        <end position="306"/>
    </location>
</feature>
<feature type="domain" description="FAD-binding PCMH-type" evidence="1">
    <location>
        <begin position="34"/>
        <end position="198"/>
    </location>
</feature>
<feature type="active site" evidence="1">
    <location>
        <position position="177"/>
    </location>
</feature>
<feature type="active site" description="Proton donor" evidence="1">
    <location>
        <position position="227"/>
    </location>
</feature>
<feature type="active site" evidence="1">
    <location>
        <position position="297"/>
    </location>
</feature>
<keyword id="KW-0131">Cell cycle</keyword>
<keyword id="KW-0132">Cell division</keyword>
<keyword id="KW-0133">Cell shape</keyword>
<keyword id="KW-0961">Cell wall biogenesis/degradation</keyword>
<keyword id="KW-0963">Cytoplasm</keyword>
<keyword id="KW-0274">FAD</keyword>
<keyword id="KW-0285">Flavoprotein</keyword>
<keyword id="KW-0521">NADP</keyword>
<keyword id="KW-0560">Oxidoreductase</keyword>
<keyword id="KW-0573">Peptidoglycan synthesis</keyword>
<organism>
    <name type="scientific">Clostridium botulinum (strain ATCC 19397 / Type A)</name>
    <dbReference type="NCBI Taxonomy" id="441770"/>
    <lineage>
        <taxon>Bacteria</taxon>
        <taxon>Bacillati</taxon>
        <taxon>Bacillota</taxon>
        <taxon>Clostridia</taxon>
        <taxon>Eubacteriales</taxon>
        <taxon>Clostridiaceae</taxon>
        <taxon>Clostridium</taxon>
    </lineage>
</organism>
<proteinExistence type="inferred from homology"/>
<name>MURB_CLOB1</name>
<comment type="function">
    <text evidence="1">Cell wall formation.</text>
</comment>
<comment type="catalytic activity">
    <reaction evidence="1">
        <text>UDP-N-acetyl-alpha-D-muramate + NADP(+) = UDP-N-acetyl-3-O-(1-carboxyvinyl)-alpha-D-glucosamine + NADPH + H(+)</text>
        <dbReference type="Rhea" id="RHEA:12248"/>
        <dbReference type="ChEBI" id="CHEBI:15378"/>
        <dbReference type="ChEBI" id="CHEBI:57783"/>
        <dbReference type="ChEBI" id="CHEBI:58349"/>
        <dbReference type="ChEBI" id="CHEBI:68483"/>
        <dbReference type="ChEBI" id="CHEBI:70757"/>
        <dbReference type="EC" id="1.3.1.98"/>
    </reaction>
</comment>
<comment type="cofactor">
    <cofactor evidence="1">
        <name>FAD</name>
        <dbReference type="ChEBI" id="CHEBI:57692"/>
    </cofactor>
</comment>
<comment type="pathway">
    <text evidence="1">Cell wall biogenesis; peptidoglycan biosynthesis.</text>
</comment>
<comment type="subcellular location">
    <subcellularLocation>
        <location evidence="1">Cytoplasm</location>
    </subcellularLocation>
</comment>
<comment type="similarity">
    <text evidence="1">Belongs to the MurB family.</text>
</comment>
<protein>
    <recommendedName>
        <fullName evidence="1">UDP-N-acetylenolpyruvoylglucosamine reductase</fullName>
        <ecNumber evidence="1">1.3.1.98</ecNumber>
    </recommendedName>
    <alternativeName>
        <fullName evidence="1">UDP-N-acetylmuramate dehydrogenase</fullName>
    </alternativeName>
</protein>